<reference key="1">
    <citation type="journal article" date="2000" name="J. Bacteriol.">
        <title>Gene rearrangements in the vsa locus of Mycoplasma pulmonis.</title>
        <authorList>
            <person name="Shen X."/>
            <person name="Gumulak J."/>
            <person name="Yu H."/>
            <person name="French C.T."/>
            <person name="Zou N."/>
            <person name="Dybvig K."/>
        </authorList>
    </citation>
    <scope>NUCLEOTIDE SEQUENCE [GENOMIC DNA]</scope>
    <source>
        <strain>CT</strain>
    </source>
</reference>
<reference key="2">
    <citation type="journal article" date="2001" name="Nucleic Acids Res.">
        <title>The complete genome sequence of the murine respiratory pathogen Mycoplasma pulmonis.</title>
        <authorList>
            <person name="Chambaud I."/>
            <person name="Heilig R."/>
            <person name="Ferris S."/>
            <person name="Barbe V."/>
            <person name="Samson D."/>
            <person name="Galisson F."/>
            <person name="Moszer I."/>
            <person name="Dybvig K."/>
            <person name="Wroblewski H."/>
            <person name="Viari A."/>
            <person name="Rocha E.P.C."/>
            <person name="Blanchard A."/>
        </authorList>
    </citation>
    <scope>NUCLEOTIDE SEQUENCE [LARGE SCALE GENOMIC DNA]</scope>
    <source>
        <strain>UAB CTIP</strain>
    </source>
</reference>
<organism>
    <name type="scientific">Mycoplasmopsis pulmonis (strain UAB CTIP)</name>
    <name type="common">Mycoplasma pulmonis</name>
    <dbReference type="NCBI Taxonomy" id="272635"/>
    <lineage>
        <taxon>Bacteria</taxon>
        <taxon>Bacillati</taxon>
        <taxon>Mycoplasmatota</taxon>
        <taxon>Mycoplasmoidales</taxon>
        <taxon>Metamycoplasmataceae</taxon>
        <taxon>Mycoplasmopsis</taxon>
    </lineage>
</organism>
<keyword id="KW-1003">Cell membrane</keyword>
<keyword id="KW-0449">Lipoprotein</keyword>
<keyword id="KW-0472">Membrane</keyword>
<keyword id="KW-0564">Palmitate</keyword>
<keyword id="KW-1185">Reference proteome</keyword>
<keyword id="KW-0732">Signal</keyword>
<protein>
    <recommendedName>
        <fullName>Lipoprotein B</fullName>
    </recommendedName>
</protein>
<proteinExistence type="inferred from homology"/>
<accession>Q9L8P6</accession>
<gene>
    <name type="primary">lipB</name>
    <name type="ordered locus">MYPU_5220</name>
</gene>
<evidence type="ECO:0000255" key="1">
    <source>
        <dbReference type="PROSITE-ProRule" id="PRU00303"/>
    </source>
</evidence>
<evidence type="ECO:0000256" key="2">
    <source>
        <dbReference type="SAM" id="MobiDB-lite"/>
    </source>
</evidence>
<evidence type="ECO:0000305" key="3"/>
<comment type="subcellular location">
    <subcellularLocation>
        <location evidence="1">Cell membrane</location>
        <topology evidence="1">Lipid-anchor</topology>
    </subcellularLocation>
</comment>
<comment type="similarity">
    <text evidence="3">Belongs to the M.pulmonis LipAB lipoprotein family.</text>
</comment>
<name>LIPB_MYCPU</name>
<feature type="signal peptide" evidence="1">
    <location>
        <begin position="1"/>
        <end position="27"/>
    </location>
</feature>
<feature type="chain" id="PRO_0000018236" description="Lipoprotein B">
    <location>
        <begin position="28"/>
        <end position="236"/>
    </location>
</feature>
<feature type="region of interest" description="Disordered" evidence="2">
    <location>
        <begin position="35"/>
        <end position="112"/>
    </location>
</feature>
<feature type="region of interest" description="Disordered" evidence="2">
    <location>
        <begin position="134"/>
        <end position="236"/>
    </location>
</feature>
<feature type="compositionally biased region" description="Polar residues" evidence="2">
    <location>
        <begin position="43"/>
        <end position="60"/>
    </location>
</feature>
<feature type="compositionally biased region" description="Basic and acidic residues" evidence="2">
    <location>
        <begin position="61"/>
        <end position="74"/>
    </location>
</feature>
<feature type="compositionally biased region" description="Polar residues" evidence="2">
    <location>
        <begin position="75"/>
        <end position="112"/>
    </location>
</feature>
<feature type="compositionally biased region" description="Polar residues" evidence="2">
    <location>
        <begin position="143"/>
        <end position="157"/>
    </location>
</feature>
<feature type="compositionally biased region" description="Basic and acidic residues" evidence="2">
    <location>
        <begin position="158"/>
        <end position="175"/>
    </location>
</feature>
<feature type="compositionally biased region" description="Polar residues" evidence="2">
    <location>
        <begin position="193"/>
        <end position="212"/>
    </location>
</feature>
<feature type="compositionally biased region" description="Basic and acidic residues" evidence="2">
    <location>
        <begin position="215"/>
        <end position="228"/>
    </location>
</feature>
<feature type="lipid moiety-binding region" description="N-palmitoyl cysteine" evidence="1">
    <location>
        <position position="28"/>
    </location>
</feature>
<feature type="lipid moiety-binding region" description="S-diacylglycerol cysteine" evidence="1">
    <location>
        <position position="28"/>
    </location>
</feature>
<dbReference type="EMBL" id="AF198037">
    <property type="protein sequence ID" value="AAF70133.1"/>
    <property type="molecule type" value="Genomic_DNA"/>
</dbReference>
<dbReference type="EMBL" id="AL445564">
    <property type="protein sequence ID" value="CAC13695.1"/>
    <property type="molecule type" value="Genomic_DNA"/>
</dbReference>
<dbReference type="PIR" id="B90577">
    <property type="entry name" value="B90577"/>
</dbReference>
<dbReference type="RefSeq" id="WP_010925323.1">
    <property type="nucleotide sequence ID" value="NC_002771.1"/>
</dbReference>
<dbReference type="STRING" id="272635.gene:17577124"/>
<dbReference type="KEGG" id="mpu:MYPU_5220"/>
<dbReference type="HOGENOM" id="CLU_1174382_0_0_14"/>
<dbReference type="BioCyc" id="MPUL272635:G1GT6-528-MONOMER"/>
<dbReference type="Proteomes" id="UP000000528">
    <property type="component" value="Chromosome"/>
</dbReference>
<dbReference type="GO" id="GO:0005886">
    <property type="term" value="C:plasma membrane"/>
    <property type="evidence" value="ECO:0007669"/>
    <property type="project" value="UniProtKB-SubCell"/>
</dbReference>
<dbReference type="PROSITE" id="PS51257">
    <property type="entry name" value="PROKAR_LIPOPROTEIN"/>
    <property type="match status" value="1"/>
</dbReference>
<sequence length="236" mass="26661">MNKKYFKKYSSILIFSMSILAPMTLASCSYNLAKEKDKDQKESTNLSEPNKSNTSKTNTFQDKKDSTNKIDSQESSKTQSQNTSESNQNTKVDSSKTNNLATNQNNPSKSNVNIQETNETKQEQNINPNNAVISEKQAENDKNASSLNSKQINNTLKNQDKTKQENDQFKQESKDSSNFTSPKPITHDPINKVISSQSTTRLEMPKNDQSNSESEDNKKSPESPKWWEKLNQGDAF</sequence>